<protein>
    <recommendedName>
        <fullName evidence="1">Large ribosomal subunit protein uL5</fullName>
    </recommendedName>
    <alternativeName>
        <fullName evidence="2">50S ribosomal protein L5</fullName>
    </alternativeName>
</protein>
<feature type="chain" id="PRO_1000166145" description="Large ribosomal subunit protein uL5">
    <location>
        <begin position="1"/>
        <end position="186"/>
    </location>
</feature>
<reference key="1">
    <citation type="journal article" date="2009" name="J. Bacteriol.">
        <title>Complete genome sequence of Rhodobacter sphaeroides KD131.</title>
        <authorList>
            <person name="Lim S.-K."/>
            <person name="Kim S.J."/>
            <person name="Cha S.H."/>
            <person name="Oh Y.-K."/>
            <person name="Rhee H.-J."/>
            <person name="Kim M.-S."/>
            <person name="Lee J.K."/>
        </authorList>
    </citation>
    <scope>NUCLEOTIDE SEQUENCE [LARGE SCALE GENOMIC DNA]</scope>
    <source>
        <strain>KD131 / KCTC 12085</strain>
    </source>
</reference>
<sequence>MLDQTNYTPRLKAAYANSVRAAMKEEFGYKNDMQIPRLDKIVLNMGVGEAVKDTKKVKTAAEELSMIAGQKAVVTHAKKSIAGFRVREQMPLGCKVTLRGDRMYEFLDRLITIALPRVRDFRGVKGNSFDGRGNYAMGLKEQFVFPEINFDKVDEVLGMDIIICTTAKTDAEAKALLKQFNMPFIS</sequence>
<evidence type="ECO:0000255" key="1">
    <source>
        <dbReference type="HAMAP-Rule" id="MF_01333"/>
    </source>
</evidence>
<evidence type="ECO:0000305" key="2"/>
<name>RL5_CERSK</name>
<keyword id="KW-0687">Ribonucleoprotein</keyword>
<keyword id="KW-0689">Ribosomal protein</keyword>
<keyword id="KW-0694">RNA-binding</keyword>
<keyword id="KW-0699">rRNA-binding</keyword>
<keyword id="KW-0820">tRNA-binding</keyword>
<gene>
    <name evidence="1" type="primary">rplE</name>
    <name type="ordered locus">RSKD131_0026</name>
</gene>
<comment type="function">
    <text evidence="1">This is one of the proteins that bind and probably mediate the attachment of the 5S RNA into the large ribosomal subunit, where it forms part of the central protuberance. In the 70S ribosome it contacts protein S13 of the 30S subunit (bridge B1b), connecting the 2 subunits; this bridge is implicated in subunit movement. Contacts the P site tRNA; the 5S rRNA and some of its associated proteins might help stabilize positioning of ribosome-bound tRNAs.</text>
</comment>
<comment type="subunit">
    <text evidence="1">Part of the 50S ribosomal subunit; part of the 5S rRNA/L5/L18/L25 subcomplex. Contacts the 5S rRNA and the P site tRNA. Forms a bridge to the 30S subunit in the 70S ribosome.</text>
</comment>
<comment type="similarity">
    <text evidence="1">Belongs to the universal ribosomal protein uL5 family.</text>
</comment>
<accession>B9KLA3</accession>
<dbReference type="EMBL" id="CP001150">
    <property type="protein sequence ID" value="ACL99885.1"/>
    <property type="molecule type" value="Genomic_DNA"/>
</dbReference>
<dbReference type="RefSeq" id="WP_011336952.1">
    <property type="nucleotide sequence ID" value="NC_011963.1"/>
</dbReference>
<dbReference type="SMR" id="B9KLA3"/>
<dbReference type="GeneID" id="67445512"/>
<dbReference type="KEGG" id="rsk:RSKD131_0026"/>
<dbReference type="HOGENOM" id="CLU_061015_2_1_5"/>
<dbReference type="GO" id="GO:1990904">
    <property type="term" value="C:ribonucleoprotein complex"/>
    <property type="evidence" value="ECO:0007669"/>
    <property type="project" value="UniProtKB-KW"/>
</dbReference>
<dbReference type="GO" id="GO:0005840">
    <property type="term" value="C:ribosome"/>
    <property type="evidence" value="ECO:0007669"/>
    <property type="project" value="UniProtKB-KW"/>
</dbReference>
<dbReference type="GO" id="GO:0019843">
    <property type="term" value="F:rRNA binding"/>
    <property type="evidence" value="ECO:0007669"/>
    <property type="project" value="UniProtKB-UniRule"/>
</dbReference>
<dbReference type="GO" id="GO:0003735">
    <property type="term" value="F:structural constituent of ribosome"/>
    <property type="evidence" value="ECO:0007669"/>
    <property type="project" value="InterPro"/>
</dbReference>
<dbReference type="GO" id="GO:0000049">
    <property type="term" value="F:tRNA binding"/>
    <property type="evidence" value="ECO:0007669"/>
    <property type="project" value="UniProtKB-UniRule"/>
</dbReference>
<dbReference type="GO" id="GO:0006412">
    <property type="term" value="P:translation"/>
    <property type="evidence" value="ECO:0007669"/>
    <property type="project" value="UniProtKB-UniRule"/>
</dbReference>
<dbReference type="FunFam" id="3.30.1440.10:FF:000001">
    <property type="entry name" value="50S ribosomal protein L5"/>
    <property type="match status" value="1"/>
</dbReference>
<dbReference type="Gene3D" id="3.30.1440.10">
    <property type="match status" value="1"/>
</dbReference>
<dbReference type="HAMAP" id="MF_01333_B">
    <property type="entry name" value="Ribosomal_uL5_B"/>
    <property type="match status" value="1"/>
</dbReference>
<dbReference type="InterPro" id="IPR002132">
    <property type="entry name" value="Ribosomal_uL5"/>
</dbReference>
<dbReference type="InterPro" id="IPR020930">
    <property type="entry name" value="Ribosomal_uL5_bac-type"/>
</dbReference>
<dbReference type="InterPro" id="IPR031309">
    <property type="entry name" value="Ribosomal_uL5_C"/>
</dbReference>
<dbReference type="InterPro" id="IPR020929">
    <property type="entry name" value="Ribosomal_uL5_CS"/>
</dbReference>
<dbReference type="InterPro" id="IPR022803">
    <property type="entry name" value="Ribosomal_uL5_dom_sf"/>
</dbReference>
<dbReference type="InterPro" id="IPR031310">
    <property type="entry name" value="Ribosomal_uL5_N"/>
</dbReference>
<dbReference type="NCBIfam" id="NF000585">
    <property type="entry name" value="PRK00010.1"/>
    <property type="match status" value="1"/>
</dbReference>
<dbReference type="PANTHER" id="PTHR11994">
    <property type="entry name" value="60S RIBOSOMAL PROTEIN L11-RELATED"/>
    <property type="match status" value="1"/>
</dbReference>
<dbReference type="Pfam" id="PF00281">
    <property type="entry name" value="Ribosomal_L5"/>
    <property type="match status" value="1"/>
</dbReference>
<dbReference type="Pfam" id="PF00673">
    <property type="entry name" value="Ribosomal_L5_C"/>
    <property type="match status" value="1"/>
</dbReference>
<dbReference type="PIRSF" id="PIRSF002161">
    <property type="entry name" value="Ribosomal_L5"/>
    <property type="match status" value="1"/>
</dbReference>
<dbReference type="SUPFAM" id="SSF55282">
    <property type="entry name" value="RL5-like"/>
    <property type="match status" value="1"/>
</dbReference>
<dbReference type="PROSITE" id="PS00358">
    <property type="entry name" value="RIBOSOMAL_L5"/>
    <property type="match status" value="1"/>
</dbReference>
<proteinExistence type="inferred from homology"/>
<organism>
    <name type="scientific">Cereibacter sphaeroides (strain KD131 / KCTC 12085)</name>
    <name type="common">Rhodobacter sphaeroides</name>
    <dbReference type="NCBI Taxonomy" id="557760"/>
    <lineage>
        <taxon>Bacteria</taxon>
        <taxon>Pseudomonadati</taxon>
        <taxon>Pseudomonadota</taxon>
        <taxon>Alphaproteobacteria</taxon>
        <taxon>Rhodobacterales</taxon>
        <taxon>Paracoccaceae</taxon>
        <taxon>Cereibacter</taxon>
    </lineage>
</organism>